<accession>B3LM17</accession>
<feature type="chain" id="PRO_0000399024" description="Defect at low temperature protein 1">
    <location>
        <begin position="1"/>
        <end position="342"/>
    </location>
</feature>
<feature type="topological domain" description="Cytoplasmic" evidence="2">
    <location>
        <begin position="1"/>
        <end position="15"/>
    </location>
</feature>
<feature type="transmembrane region" description="Helical" evidence="2">
    <location>
        <begin position="16"/>
        <end position="36"/>
    </location>
</feature>
<feature type="topological domain" description="Extracellular" evidence="2">
    <location>
        <begin position="37"/>
        <end position="47"/>
    </location>
</feature>
<feature type="transmembrane region" description="Helical" evidence="2">
    <location>
        <begin position="48"/>
        <end position="68"/>
    </location>
</feature>
<feature type="topological domain" description="Cytoplasmic" evidence="2">
    <location>
        <begin position="69"/>
        <end position="342"/>
    </location>
</feature>
<dbReference type="EMBL" id="CH408047">
    <property type="protein sequence ID" value="EDV11620.1"/>
    <property type="molecule type" value="Genomic_DNA"/>
</dbReference>
<dbReference type="HOGENOM" id="CLU_066044_0_0_1"/>
<dbReference type="OrthoDB" id="6588at4893"/>
<dbReference type="Proteomes" id="UP000008335">
    <property type="component" value="Unassembled WGS sequence"/>
</dbReference>
<dbReference type="GO" id="GO:0016020">
    <property type="term" value="C:membrane"/>
    <property type="evidence" value="ECO:0007669"/>
    <property type="project" value="UniProtKB-SubCell"/>
</dbReference>
<dbReference type="InterPro" id="IPR038869">
    <property type="entry name" value="DLT1"/>
</dbReference>
<dbReference type="PANTHER" id="PTHR40021">
    <property type="entry name" value="DEFECT AT LOW TEMPERATURE PROTEIN 1"/>
    <property type="match status" value="1"/>
</dbReference>
<dbReference type="PANTHER" id="PTHR40021:SF1">
    <property type="entry name" value="DEFECT AT LOW TEMPERATURE PROTEIN 1"/>
    <property type="match status" value="1"/>
</dbReference>
<protein>
    <recommendedName>
        <fullName>Defect at low temperature protein 1</fullName>
    </recommendedName>
</protein>
<evidence type="ECO:0000250" key="1"/>
<evidence type="ECO:0000255" key="2"/>
<evidence type="ECO:0000305" key="3"/>
<name>DLT1_YEAS1</name>
<keyword id="KW-0472">Membrane</keyword>
<keyword id="KW-0812">Transmembrane</keyword>
<keyword id="KW-1133">Transmembrane helix</keyword>
<proteinExistence type="inferred from homology"/>
<sequence length="342" mass="39187">MSGFAKLKSWLYKASLFVSLILLIGFSVVLPIDSIAQASKSENNAFNTFIVVGALVVFGVFCIFIIIGRMLFHKSCLKDIPRRYIPITPADLPHRSSREAVLQNMERSKELTILLKKPKDPVIHDGLEPPRRCDYPLDEKLFPEYLNYADCIKSLTDRLKYHGLFLNNLDVRMNLEDTFADVVNSQFVNHNANKIQLEKAKEFIDLYETIRFSGKDVTRDQFIKFVKFCLYFGEVSLTRDTSFANLHNFRLNGSSNNIGRTESKYSINPFDENEYAQDDMHYFPEPPTHLVRESSISTVARHVSSGVDLTNSEEHPLDTDSDCNALRLKLSKADSYRSVIRH</sequence>
<gene>
    <name type="primary">DLT1</name>
    <name type="ORF">SCRG_02016</name>
</gene>
<comment type="function">
    <text evidence="1">Required for growth under high-pressure and low-temperature conditions.</text>
</comment>
<comment type="subcellular location">
    <subcellularLocation>
        <location evidence="3">Membrane</location>
        <topology evidence="3">Multi-pass membrane protein</topology>
    </subcellularLocation>
</comment>
<comment type="similarity">
    <text evidence="3">Belongs to the DLT1 family.</text>
</comment>
<reference key="1">
    <citation type="submission" date="2005-03" db="EMBL/GenBank/DDBJ databases">
        <title>Annotation of the Saccharomyces cerevisiae RM11-1a genome.</title>
        <authorList>
            <consortium name="The Broad Institute Genome Sequencing Platform"/>
            <person name="Birren B.W."/>
            <person name="Lander E.S."/>
            <person name="Galagan J.E."/>
            <person name="Nusbaum C."/>
            <person name="Devon K."/>
            <person name="Cuomo C."/>
            <person name="Jaffe D.B."/>
            <person name="Butler J."/>
            <person name="Alvarez P."/>
            <person name="Gnerre S."/>
            <person name="Grabherr M."/>
            <person name="Kleber M."/>
            <person name="Mauceli E.W."/>
            <person name="Brockman W."/>
            <person name="MacCallum I.A."/>
            <person name="Rounsley S."/>
            <person name="Young S.K."/>
            <person name="LaButti K."/>
            <person name="Pushparaj V."/>
            <person name="DeCaprio D."/>
            <person name="Crawford M."/>
            <person name="Koehrsen M."/>
            <person name="Engels R."/>
            <person name="Montgomery P."/>
            <person name="Pearson M."/>
            <person name="Howarth C."/>
            <person name="Larson L."/>
            <person name="Luoma S."/>
            <person name="White J."/>
            <person name="O'Leary S."/>
            <person name="Kodira C.D."/>
            <person name="Zeng Q."/>
            <person name="Yandava C."/>
            <person name="Alvarado L."/>
            <person name="Pratt S."/>
            <person name="Kruglyak L."/>
        </authorList>
    </citation>
    <scope>NUCLEOTIDE SEQUENCE [LARGE SCALE GENOMIC DNA]</scope>
    <source>
        <strain>RM11-1a</strain>
    </source>
</reference>
<organism>
    <name type="scientific">Saccharomyces cerevisiae (strain RM11-1a)</name>
    <name type="common">Baker's yeast</name>
    <dbReference type="NCBI Taxonomy" id="285006"/>
    <lineage>
        <taxon>Eukaryota</taxon>
        <taxon>Fungi</taxon>
        <taxon>Dikarya</taxon>
        <taxon>Ascomycota</taxon>
        <taxon>Saccharomycotina</taxon>
        <taxon>Saccharomycetes</taxon>
        <taxon>Saccharomycetales</taxon>
        <taxon>Saccharomycetaceae</taxon>
        <taxon>Saccharomyces</taxon>
    </lineage>
</organism>